<reference key="1">
    <citation type="journal article" date="2003" name="Nat. Biotechnol.">
        <title>The genome sequence of the entomopathogenic bacterium Photorhabdus luminescens.</title>
        <authorList>
            <person name="Duchaud E."/>
            <person name="Rusniok C."/>
            <person name="Frangeul L."/>
            <person name="Buchrieser C."/>
            <person name="Givaudan A."/>
            <person name="Taourit S."/>
            <person name="Bocs S."/>
            <person name="Boursaux-Eude C."/>
            <person name="Chandler M."/>
            <person name="Charles J.-F."/>
            <person name="Dassa E."/>
            <person name="Derose R."/>
            <person name="Derzelle S."/>
            <person name="Freyssinet G."/>
            <person name="Gaudriault S."/>
            <person name="Medigue C."/>
            <person name="Lanois A."/>
            <person name="Powell K."/>
            <person name="Siguier P."/>
            <person name="Vincent R."/>
            <person name="Wingate V."/>
            <person name="Zouine M."/>
            <person name="Glaser P."/>
            <person name="Boemare N."/>
            <person name="Danchin A."/>
            <person name="Kunst F."/>
        </authorList>
    </citation>
    <scope>NUCLEOTIDE SEQUENCE [LARGE SCALE GENOMIC DNA]</scope>
    <source>
        <strain>DSM 15139 / CIP 105565 / TT01</strain>
    </source>
</reference>
<gene>
    <name evidence="1" type="primary">tmk</name>
    <name type="ordered locus">plu2828</name>
</gene>
<organism>
    <name type="scientific">Photorhabdus laumondii subsp. laumondii (strain DSM 15139 / CIP 105565 / TT01)</name>
    <name type="common">Photorhabdus luminescens subsp. laumondii</name>
    <dbReference type="NCBI Taxonomy" id="243265"/>
    <lineage>
        <taxon>Bacteria</taxon>
        <taxon>Pseudomonadati</taxon>
        <taxon>Pseudomonadota</taxon>
        <taxon>Gammaproteobacteria</taxon>
        <taxon>Enterobacterales</taxon>
        <taxon>Morganellaceae</taxon>
        <taxon>Photorhabdus</taxon>
    </lineage>
</organism>
<dbReference type="EC" id="2.7.4.9" evidence="1"/>
<dbReference type="EMBL" id="BX571868">
    <property type="protein sequence ID" value="CAE15202.1"/>
    <property type="molecule type" value="Genomic_DNA"/>
</dbReference>
<dbReference type="RefSeq" id="WP_011147048.1">
    <property type="nucleotide sequence ID" value="NC_005126.1"/>
</dbReference>
<dbReference type="SMR" id="Q7N391"/>
<dbReference type="STRING" id="243265.plu2828"/>
<dbReference type="GeneID" id="48849090"/>
<dbReference type="KEGG" id="plu:plu2828"/>
<dbReference type="eggNOG" id="COG0125">
    <property type="taxonomic scope" value="Bacteria"/>
</dbReference>
<dbReference type="HOGENOM" id="CLU_049131_0_1_6"/>
<dbReference type="OrthoDB" id="9774907at2"/>
<dbReference type="Proteomes" id="UP000002514">
    <property type="component" value="Chromosome"/>
</dbReference>
<dbReference type="GO" id="GO:0005829">
    <property type="term" value="C:cytosol"/>
    <property type="evidence" value="ECO:0007669"/>
    <property type="project" value="TreeGrafter"/>
</dbReference>
<dbReference type="GO" id="GO:0005524">
    <property type="term" value="F:ATP binding"/>
    <property type="evidence" value="ECO:0007669"/>
    <property type="project" value="UniProtKB-UniRule"/>
</dbReference>
<dbReference type="GO" id="GO:0004798">
    <property type="term" value="F:dTMP kinase activity"/>
    <property type="evidence" value="ECO:0007669"/>
    <property type="project" value="UniProtKB-UniRule"/>
</dbReference>
<dbReference type="GO" id="GO:0006233">
    <property type="term" value="P:dTDP biosynthetic process"/>
    <property type="evidence" value="ECO:0007669"/>
    <property type="project" value="InterPro"/>
</dbReference>
<dbReference type="GO" id="GO:0006235">
    <property type="term" value="P:dTTP biosynthetic process"/>
    <property type="evidence" value="ECO:0007669"/>
    <property type="project" value="UniProtKB-UniRule"/>
</dbReference>
<dbReference type="GO" id="GO:0006227">
    <property type="term" value="P:dUDP biosynthetic process"/>
    <property type="evidence" value="ECO:0007669"/>
    <property type="project" value="TreeGrafter"/>
</dbReference>
<dbReference type="CDD" id="cd01672">
    <property type="entry name" value="TMPK"/>
    <property type="match status" value="1"/>
</dbReference>
<dbReference type="FunFam" id="3.40.50.300:FF:000321">
    <property type="entry name" value="Thymidylate kinase"/>
    <property type="match status" value="1"/>
</dbReference>
<dbReference type="Gene3D" id="3.40.50.300">
    <property type="entry name" value="P-loop containing nucleotide triphosphate hydrolases"/>
    <property type="match status" value="1"/>
</dbReference>
<dbReference type="HAMAP" id="MF_00165">
    <property type="entry name" value="Thymidylate_kinase"/>
    <property type="match status" value="1"/>
</dbReference>
<dbReference type="InterPro" id="IPR027417">
    <property type="entry name" value="P-loop_NTPase"/>
</dbReference>
<dbReference type="InterPro" id="IPR039430">
    <property type="entry name" value="Thymidylate_kin-like_dom"/>
</dbReference>
<dbReference type="InterPro" id="IPR018095">
    <property type="entry name" value="Thymidylate_kin_CS"/>
</dbReference>
<dbReference type="InterPro" id="IPR018094">
    <property type="entry name" value="Thymidylate_kinase"/>
</dbReference>
<dbReference type="NCBIfam" id="TIGR00041">
    <property type="entry name" value="DTMP_kinase"/>
    <property type="match status" value="1"/>
</dbReference>
<dbReference type="PANTHER" id="PTHR10344">
    <property type="entry name" value="THYMIDYLATE KINASE"/>
    <property type="match status" value="1"/>
</dbReference>
<dbReference type="PANTHER" id="PTHR10344:SF4">
    <property type="entry name" value="UMP-CMP KINASE 2, MITOCHONDRIAL"/>
    <property type="match status" value="1"/>
</dbReference>
<dbReference type="Pfam" id="PF02223">
    <property type="entry name" value="Thymidylate_kin"/>
    <property type="match status" value="1"/>
</dbReference>
<dbReference type="SUPFAM" id="SSF52540">
    <property type="entry name" value="P-loop containing nucleoside triphosphate hydrolases"/>
    <property type="match status" value="1"/>
</dbReference>
<dbReference type="PROSITE" id="PS01331">
    <property type="entry name" value="THYMIDYLATE_KINASE"/>
    <property type="match status" value="1"/>
</dbReference>
<evidence type="ECO:0000255" key="1">
    <source>
        <dbReference type="HAMAP-Rule" id="MF_00165"/>
    </source>
</evidence>
<accession>Q7N391</accession>
<sequence length="212" mass="23754">MNSKFIVIEGLEGAGKTSAMKTIVEMLQQHGIQNLIFTREPGGTPLAEKLRGLIKQGVEGEPLTDKAEVLMLYAARVQLVENVIKPALARGTWVVGDRHDLSSQAYQGGGRGIDKNLMTSLRDTVLGDFRPDLTIYLDLPPQIGLLRARERGELDRIEKESMDFFDRTRSRYLEFAAQDKSIVTVDAAQPIEQVQADIYQVLEQWLKQQENG</sequence>
<keyword id="KW-0067">ATP-binding</keyword>
<keyword id="KW-0418">Kinase</keyword>
<keyword id="KW-0545">Nucleotide biosynthesis</keyword>
<keyword id="KW-0547">Nucleotide-binding</keyword>
<keyword id="KW-1185">Reference proteome</keyword>
<keyword id="KW-0808">Transferase</keyword>
<comment type="function">
    <text evidence="1">Phosphorylation of dTMP to form dTDP in both de novo and salvage pathways of dTTP synthesis.</text>
</comment>
<comment type="catalytic activity">
    <reaction evidence="1">
        <text>dTMP + ATP = dTDP + ADP</text>
        <dbReference type="Rhea" id="RHEA:13517"/>
        <dbReference type="ChEBI" id="CHEBI:30616"/>
        <dbReference type="ChEBI" id="CHEBI:58369"/>
        <dbReference type="ChEBI" id="CHEBI:63528"/>
        <dbReference type="ChEBI" id="CHEBI:456216"/>
        <dbReference type="EC" id="2.7.4.9"/>
    </reaction>
</comment>
<comment type="similarity">
    <text evidence="1">Belongs to the thymidylate kinase family.</text>
</comment>
<protein>
    <recommendedName>
        <fullName evidence="1">Thymidylate kinase</fullName>
        <ecNumber evidence="1">2.7.4.9</ecNumber>
    </recommendedName>
    <alternativeName>
        <fullName evidence="1">dTMP kinase</fullName>
    </alternativeName>
</protein>
<name>KTHY_PHOLL</name>
<feature type="chain" id="PRO_0000155318" description="Thymidylate kinase">
    <location>
        <begin position="1"/>
        <end position="212"/>
    </location>
</feature>
<feature type="binding site" evidence="1">
    <location>
        <begin position="10"/>
        <end position="17"/>
    </location>
    <ligand>
        <name>ATP</name>
        <dbReference type="ChEBI" id="CHEBI:30616"/>
    </ligand>
</feature>
<proteinExistence type="inferred from homology"/>